<name>RPOLV_BPN4</name>
<organismHost>
    <name type="scientific">Escherichia coli</name>
    <dbReference type="NCBI Taxonomy" id="562"/>
</organismHost>
<protein>
    <recommendedName>
        <fullName evidence="10">Virion DNA-directed RNA polymerase</fullName>
        <shortName>vRNAP</shortName>
        <ecNumber evidence="6">2.7.7.6</ecNumber>
    </recommendedName>
    <alternativeName>
        <fullName evidence="9">Gene product 50</fullName>
        <shortName>gp50</shortName>
    </alternativeName>
</protein>
<gene>
    <name type="primary">50</name>
</gene>
<comment type="function">
    <text evidence="3 5">DNA-dependent RNA polymerase, which is injected into the host upon infection and transcribes the phage early genes from promoters that have a 5-bp stem-3 nt loop hairpin structure.</text>
</comment>
<comment type="catalytic activity">
    <reaction evidence="6">
        <text>RNA(n) + a ribonucleoside 5'-triphosphate = RNA(n+1) + diphosphate</text>
        <dbReference type="Rhea" id="RHEA:21248"/>
        <dbReference type="Rhea" id="RHEA-COMP:14527"/>
        <dbReference type="Rhea" id="RHEA-COMP:17342"/>
        <dbReference type="ChEBI" id="CHEBI:33019"/>
        <dbReference type="ChEBI" id="CHEBI:61557"/>
        <dbReference type="ChEBI" id="CHEBI:140395"/>
        <dbReference type="EC" id="2.7.7.6"/>
    </reaction>
</comment>
<comment type="cofactor">
    <cofactor evidence="6">
        <name>Mg(2+)</name>
        <dbReference type="ChEBI" id="CHEBI:18420"/>
    </cofactor>
</comment>
<comment type="subcellular location">
    <subcellularLocation>
        <location evidence="4 8">Virion</location>
    </subcellularLocation>
    <text evidence="4">Present in about 4 copies in the virion.</text>
</comment>
<comment type="domain">
    <text evidence="3">Contains three functional domains; the central domain possesses the transcriptional activity.</text>
</comment>
<comment type="similarity">
    <text evidence="9">Belongs to the phage and mitochondrial RNA polymerase family.</text>
</comment>
<reference key="1">
    <citation type="submission" date="2006-11" db="EMBL/GenBank/DDBJ databases">
        <title>Genome sequence and analysis of bacteriophage N4.</title>
        <authorList>
            <person name="Hendrix R.W."/>
            <person name="Rothman-Denes L."/>
            <person name="Hatfull G.F."/>
            <person name="Lawrence J.G."/>
            <person name="Pedulla M."/>
        </authorList>
    </citation>
    <scope>NUCLEOTIDE SEQUENCE [LARGE SCALE GENOMIC DNA]</scope>
</reference>
<reference key="2">
    <citation type="journal article" date="1977" name="Proc. Natl. Acad. Sci. U.S.A.">
        <title>Virion-associated RNA polymerase required for bacteriophage N4 development.</title>
        <authorList>
            <person name="Falco S.C."/>
            <person name="Laan K.V."/>
            <person name="Rothman-Denes L.B."/>
        </authorList>
    </citation>
    <scope>SUBCELLULAR LOCATION</scope>
</reference>
<reference key="3">
    <citation type="journal article" date="2008" name="J. Mol. Biol.">
        <title>Insight into DNA and protein transport in double-stranded DNA viruses: the structure of bacteriophage N4.</title>
        <authorList>
            <person name="Choi K.H."/>
            <person name="McPartland J."/>
            <person name="Kaganman I."/>
            <person name="Bowman V.D."/>
            <person name="Rothman-Denes L.B."/>
            <person name="Rossmann M.G."/>
        </authorList>
    </citation>
    <scope>SUBCELLULAR LOCATION</scope>
</reference>
<reference key="4">
    <citation type="journal article" date="2008" name="Mol. Cell">
        <title>Structural basis for DNA-hairpin promoter recognition by the bacteriophage N4 virion RNA polymerase.</title>
        <authorList>
            <person name="Gleghorn M.L."/>
            <person name="Davydova E.K."/>
            <person name="Rothman-Denes L.B."/>
            <person name="Murakami K.S."/>
        </authorList>
    </citation>
    <scope>X-RAY CRYSTALLOGRAPHY (2.00 ANGSTROMS) OF 998-2102</scope>
    <scope>FUNCTION</scope>
</reference>
<reference key="5">
    <citation type="journal article" date="2008" name="Proc. Natl. Acad. Sci. U.S.A.">
        <title>X-ray crystal structure of the polymerase domain of the bacteriophage N4 virion RNA polymerase.</title>
        <authorList>
            <person name="Murakami K.S."/>
            <person name="Davydova E.K."/>
            <person name="Rothman-Denes L.B."/>
        </authorList>
    </citation>
    <scope>X-RAY CRYSTALLOGRAPHY (2.00 ANGSTROMS) OF 998-2101</scope>
    <scope>FUNCTION</scope>
</reference>
<reference key="6">
    <citation type="journal article" date="2011" name="Proc. Natl. Acad. Sci. U.S.A.">
        <title>X-ray crystal structures elucidate the nucleotidyl transfer reaction of transcript initiation using two nucleotides.</title>
        <authorList>
            <person name="Gleghorn M.L."/>
            <person name="Davydova E.K."/>
            <person name="Basu R."/>
            <person name="Rothman-Denes L.B."/>
            <person name="Murakami K.S."/>
        </authorList>
    </citation>
    <scope>X-RAY CRYSTALLOGRAPHY (1.80 ANGSTROMS) OF 998-2103 IN COMPLEX WITH ATP AND MANGANESE</scope>
    <scope>COFACTOR</scope>
</reference>
<reference key="7">
    <citation type="journal article" date="2013" name="J. Biol. Chem.">
        <title>Watching the bacteriophage N4 RNA polymerase transcription by time-dependent soak-trigger-freeze X-ray crystallography.</title>
        <authorList>
            <person name="Basu R.S."/>
            <person name="Murakami K.S."/>
        </authorList>
    </citation>
    <scope>X-RAY CRYSTALLOGRAPHY (2.00 ANGSTROMS) OF 998-2103 IN COMPLEX WITH ATP AND MANGANESE</scope>
    <scope>COFACTOR</scope>
</reference>
<organism evidence="11">
    <name type="scientific">Enterobacteria phage N4</name>
    <name type="common">Bacteriophage N4</name>
    <dbReference type="NCBI Taxonomy" id="2886925"/>
    <lineage>
        <taxon>Viruses</taxon>
        <taxon>Duplodnaviria</taxon>
        <taxon>Heunggongvirae</taxon>
        <taxon>Uroviricota</taxon>
        <taxon>Caudoviricetes</taxon>
        <taxon>Schitoviridae</taxon>
        <taxon>Enquatrovirinae</taxon>
        <taxon>Enquatrovirus</taxon>
        <taxon>Enquatrovirus N4</taxon>
    </lineage>
</organism>
<keyword id="KW-0002">3D-structure</keyword>
<keyword id="KW-0067">ATP-binding</keyword>
<keyword id="KW-0175">Coiled coil</keyword>
<keyword id="KW-0240">DNA-directed RNA polymerase</keyword>
<keyword id="KW-0342">GTP-binding</keyword>
<keyword id="KW-0460">Magnesium</keyword>
<keyword id="KW-0464">Manganese</keyword>
<keyword id="KW-0479">Metal-binding</keyword>
<keyword id="KW-0547">Nucleotide-binding</keyword>
<keyword id="KW-0548">Nucleotidyltransferase</keyword>
<keyword id="KW-1185">Reference proteome</keyword>
<keyword id="KW-0804">Transcription</keyword>
<keyword id="KW-0808">Transferase</keyword>
<keyword id="KW-0946">Virion</keyword>
<sequence>MSVFDRLAGFADSVTNAKQVDVSTATAQKKAEQGVTTPLVSPDAAYQMQAARTGNVGANAFEPGTVQSDFMNLTPMQIMNKYGVEQGLQLINARADAGNQVFNDSVTTRTPGEELGDIATGVGLGFVNTLGGIGALGAGLLNDDAGAVVAQQLSKFNDAVHATQSQALQDKRKLFAARNLMNEVESERQYQTDKKEGTNDIVASLSKFGRDFVGSIENAAQTDSIISDGLAEGVGSLLGAGPVLRGASLLGKAVVPANTLRSAALAGAIDAGTGTQSLARIASTVGRAAPGMVGVGAMEAGGAYQQTADEIMKMSLKDLEKSPVYQQHIKDGMSPEQARRQTASETGLTAAAIQLPIAAATGPLVSRFEMAPFRAGSLGAVGMNLARETVEEGVQGATGQLAQNIAQQQNIDKNQDLLKGVGTQAGLGALYGFGSAGVVQAPAGAARLAGAATAPVLRTTMAGVKAAGSVAGKVVSPIKNTLVARGERVMKQNEEASPVADDYVAQAAQEAMAQAPEAEVTIRDAVEATDATPEQKVAAHQYVSDLMNATRFNPENYQEAPEHIRNAVAGSTDQVQVIQKLADLVNTLDESNPQALMEAASYMYDAVSEFEQFINRDPAALDSIPKDSPAIELLNRYTNLTANIQNTPKVIGALNVINRMINESAQNGSLNVTEESSPQEMQNVALAAEVAPEKLNPESVNVVLKHAADGRIKLNNRQIAALQNAAAILKGAREYDAEAARLGLRPQDIVSKQIKTDESRTQEGQYSALQHANRIRSAYNSGNFELASAYLNDFMQFAQHMQNKVGALNEHLVTGNADKNKSVHYQALTADREWVRSRTGLGVNPYDTKSVKFAQQVALEAKTVADIANALASAYPELKVSHIKVTPLDSRLNAPAAEVVKAFRQGNRDVASSQPKADSVNQVKETPVTKQEPVTSTVQTKTPVSESVKTEPTTKESSPQAIKEPVNQSEKQDVNLTNEDNIKQPTESVKETETSTKESTVTEELKEGIDAVYPSLVGTADSKAEGIKNYFKLSFTLPEEQKSRTVGSEAPLKDVAQALSSRARYELFTEKETANPAFNGEVIKRYKELMEHGEGIADILRSRLAKFLNTKDVGKRFAQGTEANRWVGGKLLNIVEQDGDTFKYNEQLLQTAVLAGLQWRLTATSNTAIKDAKDVAAITGIDQALLPEGLVEQFDTGMTLTEAVSSLAQKIESYWGLSRNPNAPLGYTKGIPTAMAAEILAAFVESTDVVENIVDMSEIDPDNKKTIGLYTITELDSFDPINSFPTAIEEAVLVNPTEKMFFGDDIPPVANTQLRNPAVRNTPEQKAALKAEQATEFYVHTPMVQFYETLGKDRILELMGAGTLNKELLNDNHAKSLEGKNRSVEDSYNQLFSVIEQVRAQSEDISTVPIHYAYNMTRVGRMQMLGKYNPQSAKLVREAILPTKATLDLSNQNNEDFSAFQLGLAQALDIKVHTMTREVMSDELTKLLEGNLKPAIDMMVEFNTTGSLPENAVDVLNTALGDRKSFVALMALMEYSRYLVAEDKSAFVTPLYVEADGVTNGPINAMMLMTGGLFTPDWIRNIAKGGLFIGSPNKTMNEHRSTADNNDLYQASTNALMESLGKLRSNYASNMPIQSQIDSLLSLMDLFLPDINLGENGALELKRGIAKNPLTITIYGSGARGIAGKLVSSVTDAIYERMSDVLKARAKDPNISAAMAMFGKQAASEAHAEELLARFLKDMETLTSTVPVKRKGVLELQSTGTGAKGKINPKTYTIKGEQLKALQENMLHFFVEPLRNGITQTVGESLVYSTEQLQKATQIQSVVLEDMFKQRVQEKLAEKAKDPTWKKGDFLTQKELNDIQASLNNLAPMIETGSQTFYIAGSENAEVANQVLATNLDDRMRVPMSIYAPAQAGVAGIPFMTIGTGDGMMMQTLSTMKGAPKNTLKIFDGMNIGLNDITDASRKANEAVYTSWQGNPIKNVYESYAKFMKNVDFSKLSPEALEAIGKSALEYDQRENATVDDIANAASLIERNLRNIALGVDIRHKVLDKVNLSIDQMAAVGAPYQNNGKIDLSNMTPEQQADELNKLFREELEARKQKVAKARAEVKEETVSEKEPVNPDFGMVGREHKASGVRILSATAIRNLAKISNLPSTQAATLAEIQKSLAAKDYKIIYGTPTQVAEYARQKNVTELTSQEMEEAQAGNIYGWTNFDDKTIYLVSPSMETLIHELVHASTFEEVYSFYQGNEVSPTSKQAIENLEGLMEQFRSLDISKDSPEMREAYADAIATIEGHLSNGFVDPAISKAAALNEFMAWGLANRALAAKQKRTSSLVQMVKDVYQAIKKLIWGRKQAPALGEDMFSNLLFNSAILMRSQPTTQAVAKDGTLFHSKAYGNNERLSQLNQTFDKLVTDYLRTDPVTEVERRGNVANALMSATRLVRDVQSHGFNMTAQEQSVFQMVTAALATEAAIDPHAMARAQELYTHVMKHLTVEHFMADPDSTNPADRYYAQQKYDTISGANLVEVDAKGRTSLLPTFLGLAMVNEELRSIIKEMPVPKADKKLGNDIDTLLTNAGTQVMESLNRRMAGDQKATNVQDSIDALSETIMAAALKRESFYDAVATPTGNFIDRANQYVTDSIERLSETVIEKADKVIANPSNIAAKGVAHLAKLTAAIASEKQGEIVAQGVMTAMNQGKVWQPFHDLVNDIVGRTKTNANVYDLIKLVKSQISQDRQQFREHLPTVIAGKFSRKLTDTEWSAMHTGLGKTDLAVLRETMSMAEIRDLLSSSKKVKDEISTLEKEIQNQAGRNWNLVQKKSKQLAQYMIMGEVGNNLLRNAHAISRLLGERITNGPVADVAAIDKLITLYSLELMNKSDRDLLSELAQSEVEGMEFSIAYMVGQRTEEMRKAKGDNRTLLNHFKGYIPVENQQGVNLIIADDKEFAKLNSQSFTRIGTYQGSTGFRTGSKGYYFSPVAARAPYSQGILQNVRNTAGGVDIGTGFTLGTMVAGRITDKPTVERITKALAKGERGREPLMPIYNSKGQVVAYEQSVDPNMLKHLNQDNHFAKMVGVWRGRQVEEAKAQRFNDILIEQLHAMYEKDIKDSSANKSQYVNLLGKIDDPVLADAINLMNIETRHKAEELFGKDELWVRRDMLNDALGYRAASIGDVWTGNSRWSPSTLDTVKKMFLGAFGNKAYHVVMNAENTIQNLVKDAKTVIVVKSVVVPAVNFLANIYQMIGRGVPVKDIAVNIPRKTSEINQYIKSRLRQIDAEAELRAAEGNPNLVRKLKTEIQSITDSHRRMSIWPLIEAGEFSSIADAGISRDDLLVAEGKIHEYMEKLANKLPEKVRNAGRYALIAKDTALFQGIQKTVEYSDFIAKAIIYDDLVKRKKKSSSEALGQVTEEFINYDRLPGRFRGYMESMGLMWFYNFKIRSIKVAMSMIRNNPVHSLIATVVPAPTMFGNVGLPIQDNMLTMLAEGRLDYSLGFGQGLRAPTLNPWFNLTH</sequence>
<evidence type="ECO:0000255" key="1"/>
<evidence type="ECO:0000256" key="2">
    <source>
        <dbReference type="SAM" id="MobiDB-lite"/>
    </source>
</evidence>
<evidence type="ECO:0000269" key="3">
    <source>
    </source>
</evidence>
<evidence type="ECO:0000269" key="4">
    <source>
    </source>
</evidence>
<evidence type="ECO:0000269" key="5">
    <source>
    </source>
</evidence>
<evidence type="ECO:0000269" key="6">
    <source>
    </source>
</evidence>
<evidence type="ECO:0000269" key="7">
    <source>
    </source>
</evidence>
<evidence type="ECO:0000269" key="8">
    <source>
    </source>
</evidence>
<evidence type="ECO:0000305" key="9"/>
<evidence type="ECO:0000312" key="10">
    <source>
        <dbReference type="EMBL" id="AAO24831.2"/>
    </source>
</evidence>
<evidence type="ECO:0000312" key="11">
    <source>
        <dbReference type="Proteomes" id="UP000001789"/>
    </source>
</evidence>
<evidence type="ECO:0007829" key="12">
    <source>
        <dbReference type="PDB" id="2PO4"/>
    </source>
</evidence>
<evidence type="ECO:0007829" key="13">
    <source>
        <dbReference type="PDB" id="3C2P"/>
    </source>
</evidence>
<evidence type="ECO:0007829" key="14">
    <source>
        <dbReference type="PDB" id="3C3L"/>
    </source>
</evidence>
<evidence type="ECO:0007829" key="15">
    <source>
        <dbReference type="PDB" id="3Q23"/>
    </source>
</evidence>
<evidence type="ECO:0007829" key="16">
    <source>
        <dbReference type="PDB" id="3Q24"/>
    </source>
</evidence>
<evidence type="ECO:0007829" key="17">
    <source>
        <dbReference type="PDB" id="4FF3"/>
    </source>
</evidence>
<feature type="chain" id="PRO_0000431828" description="Virion DNA-directed RNA polymerase">
    <location>
        <begin position="1"/>
        <end position="3500"/>
    </location>
</feature>
<feature type="region of interest" description="Disordered" evidence="2">
    <location>
        <begin position="907"/>
        <end position="1003"/>
    </location>
</feature>
<feature type="coiled-coil region" evidence="1">
    <location>
        <begin position="2078"/>
        <end position="2111"/>
    </location>
</feature>
<feature type="coiled-coil region" evidence="1">
    <location>
        <begin position="2777"/>
        <end position="2810"/>
    </location>
</feature>
<feature type="compositionally biased region" description="Polar residues" evidence="2">
    <location>
        <begin position="910"/>
        <end position="947"/>
    </location>
</feature>
<feature type="compositionally biased region" description="Polar residues" evidence="2">
    <location>
        <begin position="955"/>
        <end position="985"/>
    </location>
</feature>
<feature type="binding site" evidence="6 7">
    <location>
        <begin position="1434"/>
        <end position="1437"/>
    </location>
    <ligand>
        <name>ATP</name>
        <dbReference type="ChEBI" id="CHEBI:30616"/>
    </ligand>
</feature>
<feature type="binding site" evidence="6 7">
    <location>
        <begin position="1556"/>
        <end position="1561"/>
    </location>
    <ligand>
        <name>ATP</name>
        <dbReference type="ChEBI" id="CHEBI:30616"/>
    </ligand>
</feature>
<feature type="binding site" evidence="6 7">
    <location>
        <position position="1556"/>
    </location>
    <ligand>
        <name>Mg(2+)</name>
        <dbReference type="ChEBI" id="CHEBI:18420"/>
    </ligand>
</feature>
<feature type="binding site" evidence="6 7">
    <location>
        <begin position="1667"/>
        <end position="1668"/>
    </location>
    <ligand>
        <name>ATP</name>
        <dbReference type="ChEBI" id="CHEBI:30616"/>
    </ligand>
</feature>
<feature type="binding site" evidence="6 7">
    <location>
        <position position="1948"/>
    </location>
    <ligand>
        <name>Mg(2+)</name>
        <dbReference type="ChEBI" id="CHEBI:18420"/>
    </ligand>
</feature>
<feature type="helix" evidence="15">
    <location>
        <begin position="1005"/>
        <end position="1012"/>
    </location>
</feature>
<feature type="strand" evidence="15">
    <location>
        <begin position="1016"/>
        <end position="1020"/>
    </location>
</feature>
<feature type="strand" evidence="12">
    <location>
        <begin position="1024"/>
        <end position="1026"/>
    </location>
</feature>
<feature type="helix" evidence="15">
    <location>
        <begin position="1030"/>
        <end position="1034"/>
    </location>
</feature>
<feature type="turn" evidence="15">
    <location>
        <begin position="1044"/>
        <end position="1047"/>
    </location>
</feature>
<feature type="helix" evidence="15">
    <location>
        <begin position="1051"/>
        <end position="1059"/>
    </location>
</feature>
<feature type="helix" evidence="15">
    <location>
        <begin position="1062"/>
        <end position="1068"/>
    </location>
</feature>
<feature type="helix" evidence="15">
    <location>
        <begin position="1080"/>
        <end position="1109"/>
    </location>
</feature>
<feature type="helix" evidence="15">
    <location>
        <begin position="1110"/>
        <end position="1112"/>
    </location>
</feature>
<feature type="helix" evidence="15">
    <location>
        <begin position="1113"/>
        <end position="1118"/>
    </location>
</feature>
<feature type="helix" evidence="15">
    <location>
        <begin position="1123"/>
        <end position="1125"/>
    </location>
</feature>
<feature type="turn" evidence="15">
    <location>
        <begin position="1127"/>
        <end position="1129"/>
    </location>
</feature>
<feature type="helix" evidence="15">
    <location>
        <begin position="1130"/>
        <end position="1134"/>
    </location>
</feature>
<feature type="strand" evidence="15">
    <location>
        <begin position="1135"/>
        <end position="1138"/>
    </location>
</feature>
<feature type="strand" evidence="15">
    <location>
        <begin position="1141"/>
        <end position="1144"/>
    </location>
</feature>
<feature type="helix" evidence="15">
    <location>
        <begin position="1146"/>
        <end position="1162"/>
    </location>
</feature>
<feature type="helix" evidence="15">
    <location>
        <begin position="1164"/>
        <end position="1166"/>
    </location>
</feature>
<feature type="helix" evidence="15">
    <location>
        <begin position="1172"/>
        <end position="1179"/>
    </location>
</feature>
<feature type="helix" evidence="15">
    <location>
        <begin position="1183"/>
        <end position="1185"/>
    </location>
</feature>
<feature type="helix" evidence="15">
    <location>
        <begin position="1190"/>
        <end position="1196"/>
    </location>
</feature>
<feature type="strand" evidence="15">
    <location>
        <begin position="1197"/>
        <end position="1199"/>
    </location>
</feature>
<feature type="helix" evidence="15">
    <location>
        <begin position="1200"/>
        <end position="1215"/>
    </location>
</feature>
<feature type="helix" evidence="15">
    <location>
        <begin position="1225"/>
        <end position="1228"/>
    </location>
</feature>
<feature type="helix" evidence="15">
    <location>
        <begin position="1230"/>
        <end position="1245"/>
    </location>
</feature>
<feature type="strand" evidence="15">
    <location>
        <begin position="1248"/>
        <end position="1255"/>
    </location>
</feature>
<feature type="helix" evidence="15">
    <location>
        <begin position="1256"/>
        <end position="1258"/>
    </location>
</feature>
<feature type="strand" evidence="15">
    <location>
        <begin position="1266"/>
        <end position="1272"/>
    </location>
</feature>
<feature type="helix" evidence="15">
    <location>
        <begin position="1280"/>
        <end position="1283"/>
    </location>
</feature>
<feature type="helix" evidence="15">
    <location>
        <begin position="1287"/>
        <end position="1292"/>
    </location>
</feature>
<feature type="strand" evidence="15">
    <location>
        <begin position="1293"/>
        <end position="1295"/>
    </location>
</feature>
<feature type="strand" evidence="15">
    <location>
        <begin position="1311"/>
        <end position="1313"/>
    </location>
</feature>
<feature type="strand" evidence="15">
    <location>
        <begin position="1316"/>
        <end position="1320"/>
    </location>
</feature>
<feature type="helix" evidence="15">
    <location>
        <begin position="1323"/>
        <end position="1334"/>
    </location>
</feature>
<feature type="strand" evidence="15">
    <location>
        <begin position="1337"/>
        <end position="1339"/>
    </location>
</feature>
<feature type="helix" evidence="15">
    <location>
        <begin position="1341"/>
        <end position="1359"/>
    </location>
</feature>
<feature type="helix" evidence="12">
    <location>
        <begin position="1366"/>
        <end position="1368"/>
    </location>
</feature>
<feature type="helix" evidence="15">
    <location>
        <begin position="1371"/>
        <end position="1401"/>
    </location>
</feature>
<feature type="helix" evidence="15">
    <location>
        <begin position="1405"/>
        <end position="1407"/>
    </location>
</feature>
<feature type="strand" evidence="15">
    <location>
        <begin position="1414"/>
        <end position="1416"/>
    </location>
</feature>
<feature type="strand" evidence="15">
    <location>
        <begin position="1422"/>
        <end position="1429"/>
    </location>
</feature>
<feature type="turn" evidence="15">
    <location>
        <begin position="1430"/>
        <end position="1432"/>
    </location>
</feature>
<feature type="helix" evidence="15">
    <location>
        <begin position="1434"/>
        <end position="1437"/>
    </location>
</feature>
<feature type="strand" evidence="15">
    <location>
        <begin position="1440"/>
        <end position="1442"/>
    </location>
</feature>
<feature type="strand" evidence="15">
    <location>
        <begin position="1445"/>
        <end position="1447"/>
    </location>
</feature>
<feature type="helix" evidence="15">
    <location>
        <begin position="1455"/>
        <end position="1467"/>
    </location>
</feature>
<feature type="helix" evidence="15">
    <location>
        <begin position="1472"/>
        <end position="1474"/>
    </location>
</feature>
<feature type="helix" evidence="15">
    <location>
        <begin position="1477"/>
        <end position="1489"/>
    </location>
</feature>
<feature type="turn" evidence="15">
    <location>
        <begin position="1490"/>
        <end position="1492"/>
    </location>
</feature>
<feature type="helix" evidence="15">
    <location>
        <begin position="1493"/>
        <end position="1505"/>
    </location>
</feature>
<feature type="helix" evidence="15">
    <location>
        <begin position="1512"/>
        <end position="1520"/>
    </location>
</feature>
<feature type="helix" evidence="15">
    <location>
        <begin position="1521"/>
        <end position="1523"/>
    </location>
</feature>
<feature type="helix" evidence="15">
    <location>
        <begin position="1526"/>
        <end position="1540"/>
    </location>
</feature>
<feature type="helix" evidence="15">
    <location>
        <begin position="1544"/>
        <end position="1546"/>
    </location>
</feature>
<feature type="strand" evidence="15">
    <location>
        <begin position="1547"/>
        <end position="1549"/>
    </location>
</feature>
<feature type="strand" evidence="15">
    <location>
        <begin position="1552"/>
        <end position="1557"/>
    </location>
</feature>
<feature type="helix" evidence="15">
    <location>
        <begin position="1560"/>
        <end position="1569"/>
    </location>
</feature>
<feature type="helix" evidence="15">
    <location>
        <begin position="1576"/>
        <end position="1583"/>
    </location>
</feature>
<feature type="turn" evidence="15">
    <location>
        <begin position="1584"/>
        <end position="1586"/>
    </location>
</feature>
<feature type="strand" evidence="15">
    <location>
        <begin position="1587"/>
        <end position="1590"/>
    </location>
</feature>
<feature type="helix" evidence="15">
    <location>
        <begin position="1596"/>
        <end position="1602"/>
    </location>
</feature>
<feature type="helix" evidence="15">
    <location>
        <begin position="1608"/>
        <end position="1625"/>
    </location>
</feature>
<feature type="turn" evidence="15">
    <location>
        <begin position="1626"/>
        <end position="1629"/>
    </location>
</feature>
<feature type="helix" evidence="15">
    <location>
        <begin position="1631"/>
        <end position="1647"/>
    </location>
</feature>
<feature type="strand" evidence="15">
    <location>
        <begin position="1651"/>
        <end position="1653"/>
    </location>
</feature>
<feature type="turn" evidence="14">
    <location>
        <begin position="1655"/>
        <end position="1657"/>
    </location>
</feature>
<feature type="strand" evidence="15">
    <location>
        <begin position="1659"/>
        <end position="1661"/>
    </location>
</feature>
<feature type="helix" evidence="15">
    <location>
        <begin position="1664"/>
        <end position="1674"/>
    </location>
</feature>
<feature type="helix" evidence="15">
    <location>
        <begin position="1679"/>
        <end position="1707"/>
    </location>
</feature>
<feature type="helix" evidence="15">
    <location>
        <begin position="1713"/>
        <end position="1718"/>
    </location>
</feature>
<feature type="turn" evidence="15">
    <location>
        <begin position="1719"/>
        <end position="1721"/>
    </location>
</feature>
<feature type="strand" evidence="15">
    <location>
        <begin position="1723"/>
        <end position="1725"/>
    </location>
</feature>
<feature type="helix" evidence="15">
    <location>
        <begin position="1726"/>
        <end position="1744"/>
    </location>
</feature>
<feature type="strand" evidence="15">
    <location>
        <begin position="1745"/>
        <end position="1750"/>
    </location>
</feature>
<feature type="strand" evidence="15">
    <location>
        <begin position="1753"/>
        <end position="1758"/>
    </location>
</feature>
<feature type="turn" evidence="15">
    <location>
        <begin position="1769"/>
        <end position="1771"/>
    </location>
</feature>
<feature type="helix" evidence="15">
    <location>
        <begin position="1776"/>
        <end position="1789"/>
    </location>
</feature>
<feature type="helix" evidence="15">
    <location>
        <begin position="1791"/>
        <end position="1802"/>
    </location>
</feature>
<feature type="helix" evidence="15">
    <location>
        <begin position="1804"/>
        <end position="1839"/>
    </location>
</feature>
<feature type="helix" evidence="15">
    <location>
        <begin position="1853"/>
        <end position="1861"/>
    </location>
</feature>
<feature type="helix" evidence="15">
    <location>
        <begin position="1862"/>
        <end position="1866"/>
    </location>
</feature>
<feature type="strand" evidence="16">
    <location>
        <begin position="1869"/>
        <end position="1871"/>
    </location>
</feature>
<feature type="strand" evidence="15">
    <location>
        <begin position="1881"/>
        <end position="1885"/>
    </location>
</feature>
<feature type="turn" evidence="15">
    <location>
        <begin position="1886"/>
        <end position="1888"/>
    </location>
</feature>
<feature type="strand" evidence="15">
    <location>
        <begin position="1890"/>
        <end position="1893"/>
    </location>
</feature>
<feature type="strand" evidence="15">
    <location>
        <begin position="1906"/>
        <end position="1909"/>
    </location>
</feature>
<feature type="turn" evidence="15">
    <location>
        <begin position="1913"/>
        <end position="1915"/>
    </location>
</feature>
<feature type="helix" evidence="15">
    <location>
        <begin position="1916"/>
        <end position="1924"/>
    </location>
</feature>
<feature type="helix" evidence="15">
    <location>
        <begin position="1926"/>
        <end position="1935"/>
    </location>
</feature>
<feature type="strand" evidence="15">
    <location>
        <begin position="1944"/>
        <end position="1946"/>
    </location>
</feature>
<feature type="strand" evidence="15">
    <location>
        <begin position="1949"/>
        <end position="1953"/>
    </location>
</feature>
<feature type="helix" evidence="17">
    <location>
        <begin position="1954"/>
        <end position="1956"/>
    </location>
</feature>
<feature type="helix" evidence="15">
    <location>
        <begin position="1957"/>
        <end position="1971"/>
    </location>
</feature>
<feature type="helix" evidence="15">
    <location>
        <begin position="1976"/>
        <end position="1990"/>
    </location>
</feature>
<feature type="helix" evidence="15">
    <location>
        <begin position="1993"/>
        <end position="1995"/>
    </location>
</feature>
<feature type="helix" evidence="15">
    <location>
        <begin position="1998"/>
        <end position="2008"/>
    </location>
</feature>
<feature type="helix" evidence="15">
    <location>
        <begin position="2011"/>
        <end position="2013"/>
    </location>
</feature>
<feature type="turn" evidence="13">
    <location>
        <begin position="2014"/>
        <end position="2016"/>
    </location>
</feature>
<feature type="helix" evidence="15">
    <location>
        <begin position="2019"/>
        <end position="2048"/>
    </location>
</feature>
<feature type="strand" evidence="15">
    <location>
        <begin position="2052"/>
        <end position="2054"/>
    </location>
</feature>
<feature type="strand" evidence="15">
    <location>
        <begin position="2056"/>
        <end position="2060"/>
    </location>
</feature>
<feature type="helix" evidence="15">
    <location>
        <begin position="2077"/>
        <end position="2096"/>
    </location>
</feature>
<proteinExistence type="evidence at protein level"/>
<dbReference type="EC" id="2.7.7.6" evidence="6"/>
<dbReference type="EMBL" id="EF056009">
    <property type="protein sequence ID" value="AAO24831.2"/>
    <property type="molecule type" value="Genomic_DNA"/>
</dbReference>
<dbReference type="RefSeq" id="YP_950528.1">
    <property type="nucleotide sequence ID" value="NC_008720.1"/>
</dbReference>
<dbReference type="PDB" id="2PO4">
    <property type="method" value="X-ray"/>
    <property type="resolution" value="2.00 A"/>
    <property type="chains" value="A=998-2101"/>
</dbReference>
<dbReference type="PDB" id="3C2P">
    <property type="method" value="X-ray"/>
    <property type="resolution" value="2.00 A"/>
    <property type="chains" value="A/B=998-2102"/>
</dbReference>
<dbReference type="PDB" id="3C3L">
    <property type="method" value="X-ray"/>
    <property type="resolution" value="2.40 A"/>
    <property type="chains" value="A/B=998-2102"/>
</dbReference>
<dbReference type="PDB" id="3C46">
    <property type="method" value="X-ray"/>
    <property type="resolution" value="2.00 A"/>
    <property type="chains" value="A/B=998-2102"/>
</dbReference>
<dbReference type="PDB" id="3Q0A">
    <property type="method" value="X-ray"/>
    <property type="resolution" value="2.69 A"/>
    <property type="chains" value="A/B=998-2103"/>
</dbReference>
<dbReference type="PDB" id="3Q22">
    <property type="method" value="X-ray"/>
    <property type="resolution" value="2.11 A"/>
    <property type="chains" value="A/B=998-2103"/>
</dbReference>
<dbReference type="PDB" id="3Q23">
    <property type="method" value="X-ray"/>
    <property type="resolution" value="1.80 A"/>
    <property type="chains" value="A/B=998-2103"/>
</dbReference>
<dbReference type="PDB" id="3Q24">
    <property type="method" value="X-ray"/>
    <property type="resolution" value="1.81 A"/>
    <property type="chains" value="A/B=998-2102"/>
</dbReference>
<dbReference type="PDB" id="4FF1">
    <property type="method" value="X-ray"/>
    <property type="resolution" value="2.47 A"/>
    <property type="chains" value="A/B=998-2103"/>
</dbReference>
<dbReference type="PDB" id="4FF2">
    <property type="method" value="X-ray"/>
    <property type="resolution" value="2.00 A"/>
    <property type="chains" value="A/B=998-2103"/>
</dbReference>
<dbReference type="PDB" id="4FF3">
    <property type="method" value="X-ray"/>
    <property type="resolution" value="2.00 A"/>
    <property type="chains" value="A/B=998-2103"/>
</dbReference>
<dbReference type="PDB" id="4FF4">
    <property type="method" value="X-ray"/>
    <property type="resolution" value="2.03 A"/>
    <property type="chains" value="A/B=998-2103"/>
</dbReference>
<dbReference type="PDBsum" id="2PO4"/>
<dbReference type="PDBsum" id="3C2P"/>
<dbReference type="PDBsum" id="3C3L"/>
<dbReference type="PDBsum" id="3C46"/>
<dbReference type="PDBsum" id="3Q0A"/>
<dbReference type="PDBsum" id="3Q22"/>
<dbReference type="PDBsum" id="3Q23"/>
<dbReference type="PDBsum" id="3Q24"/>
<dbReference type="PDBsum" id="4FF1"/>
<dbReference type="PDBsum" id="4FF2"/>
<dbReference type="PDBsum" id="4FF3"/>
<dbReference type="PDBsum" id="4FF4"/>
<dbReference type="SMR" id="Q859P9"/>
<dbReference type="KEGG" id="vg:5075715"/>
<dbReference type="EvolutionaryTrace" id="Q859P9"/>
<dbReference type="Proteomes" id="UP000001789">
    <property type="component" value="Genome"/>
</dbReference>
<dbReference type="GO" id="GO:0000428">
    <property type="term" value="C:DNA-directed RNA polymerase complex"/>
    <property type="evidence" value="ECO:0007669"/>
    <property type="project" value="UniProtKB-KW"/>
</dbReference>
<dbReference type="GO" id="GO:0044423">
    <property type="term" value="C:virion component"/>
    <property type="evidence" value="ECO:0007669"/>
    <property type="project" value="UniProtKB-KW"/>
</dbReference>
<dbReference type="GO" id="GO:0005524">
    <property type="term" value="F:ATP binding"/>
    <property type="evidence" value="ECO:0007669"/>
    <property type="project" value="UniProtKB-KW"/>
</dbReference>
<dbReference type="GO" id="GO:0003899">
    <property type="term" value="F:DNA-directed RNA polymerase activity"/>
    <property type="evidence" value="ECO:0007669"/>
    <property type="project" value="UniProtKB-EC"/>
</dbReference>
<dbReference type="GO" id="GO:0005525">
    <property type="term" value="F:GTP binding"/>
    <property type="evidence" value="ECO:0007669"/>
    <property type="project" value="UniProtKB-KW"/>
</dbReference>
<dbReference type="GO" id="GO:0046872">
    <property type="term" value="F:metal ion binding"/>
    <property type="evidence" value="ECO:0007669"/>
    <property type="project" value="UniProtKB-KW"/>
</dbReference>
<dbReference type="Gene3D" id="1.20.140.110">
    <property type="match status" value="2"/>
</dbReference>
<dbReference type="Gene3D" id="3.30.750.220">
    <property type="match status" value="2"/>
</dbReference>
<dbReference type="Gene3D" id="6.10.140.1360">
    <property type="match status" value="1"/>
</dbReference>
<dbReference type="Gene3D" id="6.10.140.1370">
    <property type="match status" value="1"/>
</dbReference>
<dbReference type="Gene3D" id="6.10.250.1860">
    <property type="match status" value="2"/>
</dbReference>
<dbReference type="InterPro" id="IPR053805">
    <property type="entry name" value="N4_RNAP_helical"/>
</dbReference>
<dbReference type="InterPro" id="IPR049432">
    <property type="entry name" value="vRNAP_dom"/>
</dbReference>
<dbReference type="InterPro" id="IPR054062">
    <property type="entry name" value="vRNAP_dom2"/>
</dbReference>
<dbReference type="InterPro" id="IPR049433">
    <property type="entry name" value="vRNAP_plug"/>
</dbReference>
<dbReference type="PANTHER" id="PTHR34491">
    <property type="entry name" value="A-TYPE INCLUSION PROTEIN, PUTATIVE-RELATED"/>
    <property type="match status" value="1"/>
</dbReference>
<dbReference type="PANTHER" id="PTHR34491:SF162">
    <property type="entry name" value="A-TYPE INCLUSION PROTEIN, PUTATIVE-RELATED"/>
    <property type="match status" value="1"/>
</dbReference>
<dbReference type="Pfam" id="PF21894">
    <property type="entry name" value="N4_RNAP_helical"/>
    <property type="match status" value="1"/>
</dbReference>
<dbReference type="Pfam" id="PF21769">
    <property type="entry name" value="vRNAP_dom"/>
    <property type="match status" value="1"/>
</dbReference>
<dbReference type="Pfam" id="PF21867">
    <property type="entry name" value="vRNAP_dom_2"/>
    <property type="match status" value="1"/>
</dbReference>
<dbReference type="Pfam" id="PF21624">
    <property type="entry name" value="vRNAP_plug"/>
    <property type="match status" value="1"/>
</dbReference>
<accession>Q859P9</accession>